<proteinExistence type="inferred from homology"/>
<protein>
    <recommendedName>
        <fullName evidence="1">Deoxyuridine 5'-triphosphate nucleotidohydrolase</fullName>
        <shortName evidence="1">dUTPase</shortName>
        <ecNumber evidence="1">3.6.1.23</ecNumber>
    </recommendedName>
    <alternativeName>
        <fullName evidence="1">dUTP pyrophosphatase</fullName>
    </alternativeName>
</protein>
<dbReference type="EC" id="3.6.1.23" evidence="1"/>
<dbReference type="EMBL" id="CP000251">
    <property type="protein sequence ID" value="ABC80883.1"/>
    <property type="molecule type" value="Genomic_DNA"/>
</dbReference>
<dbReference type="RefSeq" id="WP_011420166.1">
    <property type="nucleotide sequence ID" value="NC_007760.1"/>
</dbReference>
<dbReference type="SMR" id="Q2IQ00"/>
<dbReference type="STRING" id="290397.Adeh_1108"/>
<dbReference type="KEGG" id="ade:Adeh_1108"/>
<dbReference type="eggNOG" id="COG0756">
    <property type="taxonomic scope" value="Bacteria"/>
</dbReference>
<dbReference type="HOGENOM" id="CLU_068508_1_2_7"/>
<dbReference type="OrthoDB" id="9809956at2"/>
<dbReference type="UniPathway" id="UPA00610">
    <property type="reaction ID" value="UER00666"/>
</dbReference>
<dbReference type="Proteomes" id="UP000001935">
    <property type="component" value="Chromosome"/>
</dbReference>
<dbReference type="GO" id="GO:0004170">
    <property type="term" value="F:dUTP diphosphatase activity"/>
    <property type="evidence" value="ECO:0007669"/>
    <property type="project" value="UniProtKB-UniRule"/>
</dbReference>
<dbReference type="GO" id="GO:0000287">
    <property type="term" value="F:magnesium ion binding"/>
    <property type="evidence" value="ECO:0007669"/>
    <property type="project" value="UniProtKB-UniRule"/>
</dbReference>
<dbReference type="GO" id="GO:0006226">
    <property type="term" value="P:dUMP biosynthetic process"/>
    <property type="evidence" value="ECO:0007669"/>
    <property type="project" value="UniProtKB-UniRule"/>
</dbReference>
<dbReference type="GO" id="GO:0046081">
    <property type="term" value="P:dUTP catabolic process"/>
    <property type="evidence" value="ECO:0007669"/>
    <property type="project" value="InterPro"/>
</dbReference>
<dbReference type="CDD" id="cd07557">
    <property type="entry name" value="trimeric_dUTPase"/>
    <property type="match status" value="1"/>
</dbReference>
<dbReference type="Gene3D" id="2.70.40.10">
    <property type="match status" value="1"/>
</dbReference>
<dbReference type="HAMAP" id="MF_00116">
    <property type="entry name" value="dUTPase_bact"/>
    <property type="match status" value="1"/>
</dbReference>
<dbReference type="InterPro" id="IPR008181">
    <property type="entry name" value="dUTPase"/>
</dbReference>
<dbReference type="InterPro" id="IPR029054">
    <property type="entry name" value="dUTPase-like"/>
</dbReference>
<dbReference type="InterPro" id="IPR036157">
    <property type="entry name" value="dUTPase-like_sf"/>
</dbReference>
<dbReference type="InterPro" id="IPR033704">
    <property type="entry name" value="dUTPase_trimeric"/>
</dbReference>
<dbReference type="NCBIfam" id="TIGR00576">
    <property type="entry name" value="dut"/>
    <property type="match status" value="1"/>
</dbReference>
<dbReference type="NCBIfam" id="NF001862">
    <property type="entry name" value="PRK00601.1"/>
    <property type="match status" value="1"/>
</dbReference>
<dbReference type="PANTHER" id="PTHR11241">
    <property type="entry name" value="DEOXYURIDINE 5'-TRIPHOSPHATE NUCLEOTIDOHYDROLASE"/>
    <property type="match status" value="1"/>
</dbReference>
<dbReference type="PANTHER" id="PTHR11241:SF0">
    <property type="entry name" value="DEOXYURIDINE 5'-TRIPHOSPHATE NUCLEOTIDOHYDROLASE"/>
    <property type="match status" value="1"/>
</dbReference>
<dbReference type="Pfam" id="PF00692">
    <property type="entry name" value="dUTPase"/>
    <property type="match status" value="1"/>
</dbReference>
<dbReference type="SUPFAM" id="SSF51283">
    <property type="entry name" value="dUTPase-like"/>
    <property type="match status" value="1"/>
</dbReference>
<reference key="1">
    <citation type="submission" date="2006-01" db="EMBL/GenBank/DDBJ databases">
        <title>Complete sequence of Anaeromyxobacter dehalogenans 2CP-C.</title>
        <authorList>
            <person name="Copeland A."/>
            <person name="Lucas S."/>
            <person name="Lapidus A."/>
            <person name="Barry K."/>
            <person name="Detter J.C."/>
            <person name="Glavina T."/>
            <person name="Hammon N."/>
            <person name="Israni S."/>
            <person name="Pitluck S."/>
            <person name="Brettin T."/>
            <person name="Bruce D."/>
            <person name="Han C."/>
            <person name="Tapia R."/>
            <person name="Gilna P."/>
            <person name="Kiss H."/>
            <person name="Schmutz J."/>
            <person name="Larimer F."/>
            <person name="Land M."/>
            <person name="Kyrpides N."/>
            <person name="Anderson I."/>
            <person name="Sanford R.A."/>
            <person name="Ritalahti K.M."/>
            <person name="Thomas H.S."/>
            <person name="Kirby J.R."/>
            <person name="Zhulin I.B."/>
            <person name="Loeffler F.E."/>
            <person name="Richardson P."/>
        </authorList>
    </citation>
    <scope>NUCLEOTIDE SEQUENCE [LARGE SCALE GENOMIC DNA]</scope>
    <source>
        <strain>2CP-C</strain>
    </source>
</reference>
<keyword id="KW-0378">Hydrolase</keyword>
<keyword id="KW-0460">Magnesium</keyword>
<keyword id="KW-0479">Metal-binding</keyword>
<keyword id="KW-0546">Nucleotide metabolism</keyword>
<keyword id="KW-1185">Reference proteome</keyword>
<accession>Q2IQ00</accession>
<feature type="chain" id="PRO_1000015441" description="Deoxyuridine 5'-triphosphate nucleotidohydrolase">
    <location>
        <begin position="1"/>
        <end position="147"/>
    </location>
</feature>
<feature type="binding site" evidence="1">
    <location>
        <begin position="67"/>
        <end position="69"/>
    </location>
    <ligand>
        <name>substrate</name>
    </ligand>
</feature>
<feature type="binding site" evidence="1">
    <location>
        <position position="80"/>
    </location>
    <ligand>
        <name>substrate</name>
    </ligand>
</feature>
<feature type="binding site" evidence="1">
    <location>
        <begin position="84"/>
        <end position="86"/>
    </location>
    <ligand>
        <name>substrate</name>
    </ligand>
</feature>
<organism>
    <name type="scientific">Anaeromyxobacter dehalogenans (strain 2CP-C)</name>
    <dbReference type="NCBI Taxonomy" id="290397"/>
    <lineage>
        <taxon>Bacteria</taxon>
        <taxon>Pseudomonadati</taxon>
        <taxon>Myxococcota</taxon>
        <taxon>Myxococcia</taxon>
        <taxon>Myxococcales</taxon>
        <taxon>Cystobacterineae</taxon>
        <taxon>Anaeromyxobacteraceae</taxon>
        <taxon>Anaeromyxobacter</taxon>
    </lineage>
</organism>
<comment type="function">
    <text evidence="1">This enzyme is involved in nucleotide metabolism: it produces dUMP, the immediate precursor of thymidine nucleotides and it decreases the intracellular concentration of dUTP so that uracil cannot be incorporated into DNA.</text>
</comment>
<comment type="catalytic activity">
    <reaction evidence="1">
        <text>dUTP + H2O = dUMP + diphosphate + H(+)</text>
        <dbReference type="Rhea" id="RHEA:10248"/>
        <dbReference type="ChEBI" id="CHEBI:15377"/>
        <dbReference type="ChEBI" id="CHEBI:15378"/>
        <dbReference type="ChEBI" id="CHEBI:33019"/>
        <dbReference type="ChEBI" id="CHEBI:61555"/>
        <dbReference type="ChEBI" id="CHEBI:246422"/>
        <dbReference type="EC" id="3.6.1.23"/>
    </reaction>
</comment>
<comment type="cofactor">
    <cofactor evidence="1">
        <name>Mg(2+)</name>
        <dbReference type="ChEBI" id="CHEBI:18420"/>
    </cofactor>
</comment>
<comment type="pathway">
    <text evidence="1">Pyrimidine metabolism; dUMP biosynthesis; dUMP from dCTP (dUTP route): step 2/2.</text>
</comment>
<comment type="similarity">
    <text evidence="1">Belongs to the dUTPase family.</text>
</comment>
<sequence length="147" mass="15322">MPVTVRVRRVGHRGPPLDLPRYESAGAAGLDLRADEPFTLAPGERRVVPTGLALELPPGHEGQVRPRSGLAARHGVGMVNAPGTIDADYRGEVGVILVNHGQAPVAFARGDRIAQLVIAPVVRAELELVDALTDSDRGAGGFGSTGQ</sequence>
<evidence type="ECO:0000255" key="1">
    <source>
        <dbReference type="HAMAP-Rule" id="MF_00116"/>
    </source>
</evidence>
<name>DUT_ANADE</name>
<gene>
    <name evidence="1" type="primary">dut</name>
    <name type="ordered locus">Adeh_1108</name>
</gene>